<evidence type="ECO:0000255" key="1">
    <source>
        <dbReference type="HAMAP-Rule" id="MF_00568"/>
    </source>
</evidence>
<organism>
    <name type="scientific">Thermus thermophilus (strain ATCC 27634 / DSM 579 / HB8)</name>
    <dbReference type="NCBI Taxonomy" id="300852"/>
    <lineage>
        <taxon>Bacteria</taxon>
        <taxon>Thermotogati</taxon>
        <taxon>Deinococcota</taxon>
        <taxon>Deinococci</taxon>
        <taxon>Thermales</taxon>
        <taxon>Thermaceae</taxon>
        <taxon>Thermus</taxon>
    </lineage>
</organism>
<gene>
    <name evidence="1" type="primary">nadA</name>
    <name type="ordered locus">TTHA0984</name>
</gene>
<proteinExistence type="inferred from homology"/>
<feature type="chain" id="PRO_1000072575" description="Quinolinate synthase">
    <location>
        <begin position="1"/>
        <end position="310"/>
    </location>
</feature>
<feature type="binding site" evidence="1">
    <location>
        <position position="27"/>
    </location>
    <ligand>
        <name>iminosuccinate</name>
        <dbReference type="ChEBI" id="CHEBI:77875"/>
    </ligand>
</feature>
<feature type="binding site" evidence="1">
    <location>
        <position position="44"/>
    </location>
    <ligand>
        <name>iminosuccinate</name>
        <dbReference type="ChEBI" id="CHEBI:77875"/>
    </ligand>
</feature>
<feature type="binding site" evidence="1">
    <location>
        <position position="89"/>
    </location>
    <ligand>
        <name>[4Fe-4S] cluster</name>
        <dbReference type="ChEBI" id="CHEBI:49883"/>
    </ligand>
</feature>
<feature type="binding site" evidence="1">
    <location>
        <begin position="115"/>
        <end position="117"/>
    </location>
    <ligand>
        <name>iminosuccinate</name>
        <dbReference type="ChEBI" id="CHEBI:77875"/>
    </ligand>
</feature>
<feature type="binding site" evidence="1">
    <location>
        <position position="132"/>
    </location>
    <ligand>
        <name>iminosuccinate</name>
        <dbReference type="ChEBI" id="CHEBI:77875"/>
    </ligand>
</feature>
<feature type="binding site" evidence="1">
    <location>
        <position position="175"/>
    </location>
    <ligand>
        <name>[4Fe-4S] cluster</name>
        <dbReference type="ChEBI" id="CHEBI:49883"/>
    </ligand>
</feature>
<feature type="binding site" evidence="1">
    <location>
        <begin position="201"/>
        <end position="203"/>
    </location>
    <ligand>
        <name>iminosuccinate</name>
        <dbReference type="ChEBI" id="CHEBI:77875"/>
    </ligand>
</feature>
<feature type="binding site" evidence="1">
    <location>
        <position position="222"/>
    </location>
    <ligand>
        <name>iminosuccinate</name>
        <dbReference type="ChEBI" id="CHEBI:77875"/>
    </ligand>
</feature>
<feature type="binding site" evidence="1">
    <location>
        <position position="267"/>
    </location>
    <ligand>
        <name>[4Fe-4S] cluster</name>
        <dbReference type="ChEBI" id="CHEBI:49883"/>
    </ligand>
</feature>
<reference key="1">
    <citation type="submission" date="2004-11" db="EMBL/GenBank/DDBJ databases">
        <title>Complete genome sequence of Thermus thermophilus HB8.</title>
        <authorList>
            <person name="Masui R."/>
            <person name="Kurokawa K."/>
            <person name="Nakagawa N."/>
            <person name="Tokunaga F."/>
            <person name="Koyama Y."/>
            <person name="Shibata T."/>
            <person name="Oshima T."/>
            <person name="Yokoyama S."/>
            <person name="Yasunaga T."/>
            <person name="Kuramitsu S."/>
        </authorList>
    </citation>
    <scope>NUCLEOTIDE SEQUENCE [LARGE SCALE GENOMIC DNA]</scope>
    <source>
        <strain>ATCC 27634 / DSM 579 / HB8</strain>
    </source>
</reference>
<name>NADA_THET8</name>
<sequence length="310" mass="34181">MGRMRGEALAQEVLRLKRERNAVILAHSYQLPEVQEVADFVGDSLGLAREAQRTRAEVIVFCGVHFMAETAAILNPEKTVLLPDLEAGCSLADSIRPEDVLAWKAKHPDGIVVAYVNTKAEVKALADVCVTSANAVEVVSRLPQDRPIYFVPDMFLGAHVARVTGRRLDLFPGECHVHAGIREEHLKALLEAHPGAEFLIHPECGCGSGCLYLKPDAKMLSTEGMVRYAKGAEAREFVVATEVGILHRLKKEAPEKAFFPVKPDAVCEYMKRITLEKVYLSLKEMRHVVRVPEEVAGRARRALEAMVAVG</sequence>
<protein>
    <recommendedName>
        <fullName evidence="1">Quinolinate synthase</fullName>
        <ecNumber evidence="1">2.5.1.72</ecNumber>
    </recommendedName>
</protein>
<keyword id="KW-0004">4Fe-4S</keyword>
<keyword id="KW-0963">Cytoplasm</keyword>
<keyword id="KW-0408">Iron</keyword>
<keyword id="KW-0411">Iron-sulfur</keyword>
<keyword id="KW-0479">Metal-binding</keyword>
<keyword id="KW-0662">Pyridine nucleotide biosynthesis</keyword>
<keyword id="KW-1185">Reference proteome</keyword>
<keyword id="KW-0808">Transferase</keyword>
<dbReference type="EC" id="2.5.1.72" evidence="1"/>
<dbReference type="EMBL" id="AP008226">
    <property type="protein sequence ID" value="BAD70807.1"/>
    <property type="molecule type" value="Genomic_DNA"/>
</dbReference>
<dbReference type="RefSeq" id="YP_144250.1">
    <property type="nucleotide sequence ID" value="NC_006461.1"/>
</dbReference>
<dbReference type="SMR" id="Q5SJM4"/>
<dbReference type="EnsemblBacteria" id="BAD70807">
    <property type="protein sequence ID" value="BAD70807"/>
    <property type="gene ID" value="BAD70807"/>
</dbReference>
<dbReference type="KEGG" id="ttj:TTHA0984"/>
<dbReference type="PATRIC" id="fig|300852.9.peg.966"/>
<dbReference type="eggNOG" id="COG0379">
    <property type="taxonomic scope" value="Bacteria"/>
</dbReference>
<dbReference type="HOGENOM" id="CLU_047382_0_0_0"/>
<dbReference type="PhylomeDB" id="Q5SJM4"/>
<dbReference type="UniPathway" id="UPA00253">
    <property type="reaction ID" value="UER00327"/>
</dbReference>
<dbReference type="Proteomes" id="UP000000532">
    <property type="component" value="Chromosome"/>
</dbReference>
<dbReference type="GO" id="GO:0005737">
    <property type="term" value="C:cytoplasm"/>
    <property type="evidence" value="ECO:0007669"/>
    <property type="project" value="UniProtKB-SubCell"/>
</dbReference>
<dbReference type="GO" id="GO:0051539">
    <property type="term" value="F:4 iron, 4 sulfur cluster binding"/>
    <property type="evidence" value="ECO:0007669"/>
    <property type="project" value="UniProtKB-KW"/>
</dbReference>
<dbReference type="GO" id="GO:0046872">
    <property type="term" value="F:metal ion binding"/>
    <property type="evidence" value="ECO:0007669"/>
    <property type="project" value="UniProtKB-KW"/>
</dbReference>
<dbReference type="GO" id="GO:0008987">
    <property type="term" value="F:quinolinate synthetase A activity"/>
    <property type="evidence" value="ECO:0007669"/>
    <property type="project" value="UniProtKB-UniRule"/>
</dbReference>
<dbReference type="GO" id="GO:0034628">
    <property type="term" value="P:'de novo' NAD biosynthetic process from L-aspartate"/>
    <property type="evidence" value="ECO:0007669"/>
    <property type="project" value="TreeGrafter"/>
</dbReference>
<dbReference type="Gene3D" id="3.40.50.10800">
    <property type="entry name" value="NadA-like"/>
    <property type="match status" value="3"/>
</dbReference>
<dbReference type="HAMAP" id="MF_00568">
    <property type="entry name" value="NadA_type2"/>
    <property type="match status" value="1"/>
</dbReference>
<dbReference type="InterPro" id="IPR003473">
    <property type="entry name" value="NadA"/>
</dbReference>
<dbReference type="InterPro" id="IPR036094">
    <property type="entry name" value="NadA_sf"/>
</dbReference>
<dbReference type="InterPro" id="IPR023066">
    <property type="entry name" value="Quinolinate_synth_type2"/>
</dbReference>
<dbReference type="NCBIfam" id="TIGR00550">
    <property type="entry name" value="nadA"/>
    <property type="match status" value="1"/>
</dbReference>
<dbReference type="NCBIfam" id="NF006878">
    <property type="entry name" value="PRK09375.1-2"/>
    <property type="match status" value="1"/>
</dbReference>
<dbReference type="NCBIfam" id="NF006879">
    <property type="entry name" value="PRK09375.1-4"/>
    <property type="match status" value="1"/>
</dbReference>
<dbReference type="PANTHER" id="PTHR30573:SF0">
    <property type="entry name" value="QUINOLINATE SYNTHASE, CHLOROPLASTIC"/>
    <property type="match status" value="1"/>
</dbReference>
<dbReference type="PANTHER" id="PTHR30573">
    <property type="entry name" value="QUINOLINATE SYNTHETASE A"/>
    <property type="match status" value="1"/>
</dbReference>
<dbReference type="Pfam" id="PF02445">
    <property type="entry name" value="NadA"/>
    <property type="match status" value="1"/>
</dbReference>
<dbReference type="SUPFAM" id="SSF142754">
    <property type="entry name" value="NadA-like"/>
    <property type="match status" value="1"/>
</dbReference>
<comment type="function">
    <text evidence="1">Catalyzes the condensation of iminoaspartate with dihydroxyacetone phosphate to form quinolinate.</text>
</comment>
<comment type="catalytic activity">
    <reaction evidence="1">
        <text>iminosuccinate + dihydroxyacetone phosphate = quinolinate + phosphate + 2 H2O + H(+)</text>
        <dbReference type="Rhea" id="RHEA:25888"/>
        <dbReference type="ChEBI" id="CHEBI:15377"/>
        <dbReference type="ChEBI" id="CHEBI:15378"/>
        <dbReference type="ChEBI" id="CHEBI:29959"/>
        <dbReference type="ChEBI" id="CHEBI:43474"/>
        <dbReference type="ChEBI" id="CHEBI:57642"/>
        <dbReference type="ChEBI" id="CHEBI:77875"/>
        <dbReference type="EC" id="2.5.1.72"/>
    </reaction>
    <physiologicalReaction direction="left-to-right" evidence="1">
        <dbReference type="Rhea" id="RHEA:25889"/>
    </physiologicalReaction>
</comment>
<comment type="cofactor">
    <cofactor evidence="1">
        <name>[4Fe-4S] cluster</name>
        <dbReference type="ChEBI" id="CHEBI:49883"/>
    </cofactor>
    <text evidence="1">Binds 1 [4Fe-4S] cluster per subunit.</text>
</comment>
<comment type="pathway">
    <text evidence="1">Cofactor biosynthesis; NAD(+) biosynthesis; quinolinate from iminoaspartate: step 1/1.</text>
</comment>
<comment type="subcellular location">
    <subcellularLocation>
        <location evidence="1">Cytoplasm</location>
    </subcellularLocation>
</comment>
<comment type="similarity">
    <text evidence="1">Belongs to the quinolinate synthase family. Type 2 subfamily.</text>
</comment>
<accession>Q5SJM4</accession>